<proteinExistence type="evidence at protein level"/>
<protein>
    <recommendedName>
        <fullName>SPS-sensor component PTR3</fullName>
    </recommendedName>
    <alternativeName>
        <fullName>Peptide transport protein 3</fullName>
    </alternativeName>
</protein>
<sequence length="678" mass="76286">MHSHRQKWGRQTDIARVLDDIEHDLYLPQRLSLDGATGTDESHVQYGIVKDCSVLTCGCCISESLFNDLCRETSNKQTACPICQRENVRLLSAIKPLRDLARQIDFFRSTTGQGESESDELPAIVKTSPSSSSLSLTPSRSSSTAGLEADNKTLSDPTVKEKSSLLELFHIVASKMHNANTEVGSDHPLTTGTTRDQEEHTTKENYSSSLLEPNYDDHANWKILDNASNTRTVPIDNNFSLMSTDVTIPSTANYQTNSAHDLDEEKEYFFANCFPMYRKKFQFNTHPKFLGTKSKLFINQSISPDCTKFALITEHKWEIYSINPKDNSPQLVSCGKSSGEYGPNFNQLTEQSSSSLSTTSQASKKKKKNWSQRFCKLSNDFLIISGSQNILNVHDIHQNGKLIYTYVSRFPIRCIDIDPRSQIIAYGITGKDRHTGAEQALVVIQQITRNKVTLEPEFPPPITITLPYRDPINTIQLSHDAKYLTCSTALESRFLIISLQKINEPRLIMKSVRSIDTSLESEGITDTKLFPGNPNLMCITSTAFNSSPLVINTKITQINGVRTVAQPSMLIRVDEIGCKIHKCEISPRNDAIAFLDRNGSVYIMCAPTMMDNNEKRRTILVETVANAYRAYESATLRFNPEGNKLYILDRKGTFFVEDFAYGLPQSREITKCKQIFHK</sequence>
<gene>
    <name type="primary">PTR3</name>
    <name type="synonym">APF3</name>
    <name type="synonym">SSY3</name>
    <name type="ordered locus">YFR029W</name>
</gene>
<accession>P43606</accession>
<accession>D6VTQ9</accession>
<name>PTR3_YEAST</name>
<comment type="function">
    <text evidence="2 3 4 5 7 8">Component of the SPS-sensor system, which regulates the expression of several amino acid-metabolizing enzymes and amino acid- and peptide-permeases in response to extracellular amino acid levels by controlling the activity of two transcription factors, STP1 and STP2.</text>
</comment>
<comment type="subunit">
    <text evidence="4 7">Homodimer. Component of the plasma membrane SPS (SSY1-PTR3-SSY5) amino acid sensor complex. Interacts directly with SSY1 and SSY5.</text>
</comment>
<comment type="subcellular location">
    <subcellularLocation>
        <location evidence="2 3">Cell membrane</location>
        <topology evidence="2 3">Peripheral membrane protein</topology>
        <orientation evidence="2 3">Cytoplasmic side</orientation>
    </subcellularLocation>
</comment>
<comment type="PTM">
    <text evidence="7">Hyperphosphorylated in response to extracellular amino acids and dependent on the amino acid sensor component SSY1. Phosphorylation is positively regulated by casein kinases YCK1 and YCK2, and negatively regulated by phosphatase PP2A regulatory subunit RTS1.</text>
</comment>
<organism>
    <name type="scientific">Saccharomyces cerevisiae (strain ATCC 204508 / S288c)</name>
    <name type="common">Baker's yeast</name>
    <dbReference type="NCBI Taxonomy" id="559292"/>
    <lineage>
        <taxon>Eukaryota</taxon>
        <taxon>Fungi</taxon>
        <taxon>Dikarya</taxon>
        <taxon>Ascomycota</taxon>
        <taxon>Saccharomycotina</taxon>
        <taxon>Saccharomycetes</taxon>
        <taxon>Saccharomycetales</taxon>
        <taxon>Saccharomycetaceae</taxon>
        <taxon>Saccharomyces</taxon>
    </lineage>
</organism>
<feature type="chain" id="PRO_0000097093" description="SPS-sensor component PTR3">
    <location>
        <begin position="1"/>
        <end position="678"/>
    </location>
</feature>
<feature type="region of interest" description="Disordered" evidence="1">
    <location>
        <begin position="111"/>
        <end position="158"/>
    </location>
</feature>
<feature type="region of interest" description="Disordered" evidence="1">
    <location>
        <begin position="179"/>
        <end position="211"/>
    </location>
</feature>
<feature type="compositionally biased region" description="Low complexity" evidence="1">
    <location>
        <begin position="127"/>
        <end position="144"/>
    </location>
</feature>
<feature type="compositionally biased region" description="Basic and acidic residues" evidence="1">
    <location>
        <begin position="149"/>
        <end position="158"/>
    </location>
</feature>
<feature type="compositionally biased region" description="Polar residues" evidence="1">
    <location>
        <begin position="179"/>
        <end position="194"/>
    </location>
</feature>
<feature type="mutagenesis site" description="No effect." evidence="7">
    <original>S</original>
    <variation>A</variation>
    <location>
        <position position="321"/>
    </location>
</feature>
<feature type="mutagenesis site" description="In PTR3-17; constitutively active, confers increased STP1 processing in the absence of amino acids." evidence="6 7">
    <original>T</original>
    <variation>K</variation>
    <location>
        <position position="435"/>
    </location>
</feature>
<feature type="mutagenesis site" description="In PTR3-5; constitutively active and hyperphosphorylated, confers increased STP1 processing in the absence of amino acids." evidence="6 7">
    <original>Q</original>
    <variation>R</variation>
    <location>
        <position position="439"/>
    </location>
</feature>
<feature type="mutagenesis site" description="Loss of function. Abolishes hyperphosphorylation of PTR3 and, consequently, results in a failure to activate STP1." evidence="7">
    <original>T</original>
    <variation>A</variation>
    <variation>D</variation>
    <variation>E</variation>
    <location>
        <position position="525"/>
    </location>
</feature>
<feature type="mutagenesis site" description="No effect." evidence="7">
    <original>T</original>
    <variation>A</variation>
    <location>
        <position position="635"/>
    </location>
</feature>
<reference key="1">
    <citation type="journal article" date="1995" name="Nat. Genet.">
        <title>Analysis of the nucleotide sequence of chromosome VI from Saccharomyces cerevisiae.</title>
        <authorList>
            <person name="Murakami Y."/>
            <person name="Naitou M."/>
            <person name="Hagiwara H."/>
            <person name="Shibata T."/>
            <person name="Ozawa M."/>
            <person name="Sasanuma S."/>
            <person name="Sasanuma M."/>
            <person name="Tsuchiya Y."/>
            <person name="Soeda E."/>
            <person name="Yokoyama K."/>
            <person name="Yamazaki M."/>
            <person name="Tashiro H."/>
            <person name="Eki T."/>
        </authorList>
    </citation>
    <scope>NUCLEOTIDE SEQUENCE [LARGE SCALE GENOMIC DNA]</scope>
    <source>
        <strain>ATCC 204508 / S288c</strain>
    </source>
</reference>
<reference key="2">
    <citation type="journal article" date="2014" name="G3 (Bethesda)">
        <title>The reference genome sequence of Saccharomyces cerevisiae: Then and now.</title>
        <authorList>
            <person name="Engel S.R."/>
            <person name="Dietrich F.S."/>
            <person name="Fisk D.G."/>
            <person name="Binkley G."/>
            <person name="Balakrishnan R."/>
            <person name="Costanzo M.C."/>
            <person name="Dwight S.S."/>
            <person name="Hitz B.C."/>
            <person name="Karra K."/>
            <person name="Nash R.S."/>
            <person name="Weng S."/>
            <person name="Wong E.D."/>
            <person name="Lloyd P."/>
            <person name="Skrzypek M.S."/>
            <person name="Miyasato S.R."/>
            <person name="Simison M."/>
            <person name="Cherry J.M."/>
        </authorList>
    </citation>
    <scope>GENOME REANNOTATION</scope>
    <source>
        <strain>ATCC 204508 / S288c</strain>
    </source>
</reference>
<reference key="3">
    <citation type="journal article" date="1996" name="Yeast">
        <title>Fifteen open reading frames in a 30.8 kb region of the right arm of chromosome VI from Saccharomyces cerevisiae.</title>
        <authorList>
            <person name="Eki T."/>
            <person name="Naitou M."/>
            <person name="Hagiwara H."/>
            <person name="Abe M."/>
            <person name="Ozawa M."/>
            <person name="Sasanuma S."/>
            <person name="Sasanuma M."/>
            <person name="Tsuchiya Y."/>
            <person name="Shibata T."/>
            <person name="Watanabe K."/>
            <person name="Ono A."/>
            <person name="Yamazaki M."/>
            <person name="Tashiro H."/>
            <person name="Hanaoka F."/>
            <person name="Murakami Y."/>
        </authorList>
    </citation>
    <scope>NUCLEOTIDE SEQUENCE [GENOMIC DNA]</scope>
    <source>
        <strain>ATCC 204511 / S288c / AB972</strain>
    </source>
</reference>
<reference key="4">
    <citation type="journal article" date="1998" name="Mol. Microbiol.">
        <title>PTR3, a novel gene mediating amino acid-inducible regulation of peptide transport in Saccharomyces cerevisiae.</title>
        <authorList>
            <person name="Barnes D."/>
            <person name="Lai W."/>
            <person name="Breslav M."/>
            <person name="Naider F."/>
            <person name="Becker J.M."/>
        </authorList>
    </citation>
    <scope>FUNCTION</scope>
</reference>
<reference key="5">
    <citation type="journal article" date="1998" name="Yeast">
        <title>Mutations in five loci affecting GAP1-independent uptake of neutral amino acids in yeast.</title>
        <authorList>
            <person name="Joergensen M.U."/>
            <person name="Bruun M.B."/>
            <person name="Didion T."/>
            <person name="Kielland-Brandt M.C."/>
        </authorList>
    </citation>
    <scope>IDENTIFICATION</scope>
</reference>
<reference key="6">
    <citation type="journal article" date="1999" name="Mol. Cell. Biol.">
        <title>Ssy1p and Ptr3p are plasma membrane components of a yeast system that senses extracellular amino acids.</title>
        <authorList>
            <person name="Klasson H."/>
            <person name="Fink G.R."/>
            <person name="Ljungdahl P.O."/>
        </authorList>
    </citation>
    <scope>FUNCTION</scope>
    <scope>SUBCELLULAR LOCATION</scope>
</reference>
<reference key="7">
    <citation type="journal article" date="2001" name="Mol. Cell. Biol.">
        <title>Genetic and biochemical analysis of the yeast plasma membrane Ssy1p-Ptr3p-Ssy5p sensor of extracellular amino acids.</title>
        <authorList>
            <person name="Forsberg H."/>
            <person name="Ljungdahl P.O."/>
        </authorList>
    </citation>
    <scope>FUNCTION</scope>
    <scope>SUBCELLULAR LOCATION</scope>
</reference>
<reference key="8">
    <citation type="journal article" date="2001" name="Mol. Microbiol.">
        <title>Genetic analysis of the signalling pathway activated by external amino acids in Saccharomyces cerevisiae.</title>
        <authorList>
            <person name="Bernard F."/>
            <person name="Andre B."/>
        </authorList>
    </citation>
    <scope>FUNCTION</scope>
    <scope>INTERACTION WITH SSY5</scope>
</reference>
<reference key="9">
    <citation type="journal article" date="2002" name="Genes Dev.">
        <title>Receptor-mediated endoproteolytic activation of two transcription factors in yeast.</title>
        <authorList>
            <person name="Andreasson C."/>
            <person name="Ljungdahl P.O."/>
        </authorList>
    </citation>
    <scope>FUNCTION</scope>
</reference>
<reference key="10">
    <citation type="journal article" date="2005" name="Eukaryot. Cell">
        <title>Constitutive signal transduction by mutant Ssy5p and Ptr3p components of the SPS amino acid sensor system in Saccharomyces cerevisiae.</title>
        <authorList>
            <person name="Poulsen P."/>
            <person name="Wu B."/>
            <person name="Gaber R.F."/>
            <person name="Kielland-Brandt M.C."/>
        </authorList>
    </citation>
    <scope>MUTAGENESIS OF THR-435 AND GLN-439</scope>
</reference>
<reference key="11">
    <citation type="journal article" date="2008" name="Mol. Cell. Biol.">
        <title>Activation of the SPS amino acid-sensing pathway in Saccharomyces cerevisiae correlates with the phosphorylation state of a sensor component, Ptr3.</title>
        <authorList>
            <person name="Liu Z."/>
            <person name="Thornton J."/>
            <person name="Spirek M."/>
            <person name="Butow R.A."/>
        </authorList>
    </citation>
    <scope>FUNCTION</scope>
    <scope>PHOSPHORYLATION</scope>
    <scope>INTERACTION WITH SSY1 AND SSY5</scope>
    <scope>MUTAGENESIS OF SER-321; THR-435; GLN-439; THR-525 AND THR-635</scope>
</reference>
<keyword id="KW-1003">Cell membrane</keyword>
<keyword id="KW-0472">Membrane</keyword>
<keyword id="KW-1185">Reference proteome</keyword>
<evidence type="ECO:0000256" key="1">
    <source>
        <dbReference type="SAM" id="MobiDB-lite"/>
    </source>
</evidence>
<evidence type="ECO:0000269" key="2">
    <source>
    </source>
</evidence>
<evidence type="ECO:0000269" key="3">
    <source>
    </source>
</evidence>
<evidence type="ECO:0000269" key="4">
    <source>
    </source>
</evidence>
<evidence type="ECO:0000269" key="5">
    <source>
    </source>
</evidence>
<evidence type="ECO:0000269" key="6">
    <source>
    </source>
</evidence>
<evidence type="ECO:0000269" key="7">
    <source>
    </source>
</evidence>
<evidence type="ECO:0000269" key="8">
    <source>
    </source>
</evidence>
<dbReference type="EMBL" id="D50617">
    <property type="protein sequence ID" value="BAA09268.1"/>
    <property type="molecule type" value="Genomic_DNA"/>
</dbReference>
<dbReference type="EMBL" id="BK006940">
    <property type="protein sequence ID" value="DAA12469.1"/>
    <property type="molecule type" value="Genomic_DNA"/>
</dbReference>
<dbReference type="PIR" id="S56284">
    <property type="entry name" value="S56284"/>
</dbReference>
<dbReference type="RefSeq" id="NP_116685.1">
    <property type="nucleotide sequence ID" value="NM_001179994.1"/>
</dbReference>
<dbReference type="BioGRID" id="31184">
    <property type="interactions" value="85"/>
</dbReference>
<dbReference type="FunCoup" id="P43606">
    <property type="interactions" value="54"/>
</dbReference>
<dbReference type="IntAct" id="P43606">
    <property type="interactions" value="2"/>
</dbReference>
<dbReference type="MINT" id="P43606"/>
<dbReference type="STRING" id="4932.YFR029W"/>
<dbReference type="iPTMnet" id="P43606"/>
<dbReference type="PaxDb" id="4932-YFR029W"/>
<dbReference type="PeptideAtlas" id="P43606"/>
<dbReference type="EnsemblFungi" id="YFR029W_mRNA">
    <property type="protein sequence ID" value="YFR029W"/>
    <property type="gene ID" value="YFR029W"/>
</dbReference>
<dbReference type="GeneID" id="850587"/>
<dbReference type="KEGG" id="sce:YFR029W"/>
<dbReference type="AGR" id="SGD:S000001925"/>
<dbReference type="SGD" id="S000001925">
    <property type="gene designation" value="PTR3"/>
</dbReference>
<dbReference type="VEuPathDB" id="FungiDB:YFR029W"/>
<dbReference type="eggNOG" id="ENOG502QUFR">
    <property type="taxonomic scope" value="Eukaryota"/>
</dbReference>
<dbReference type="HOGENOM" id="CLU_028479_0_0_1"/>
<dbReference type="InParanoid" id="P43606"/>
<dbReference type="OMA" id="TNFPIRC"/>
<dbReference type="OrthoDB" id="5324744at2759"/>
<dbReference type="BioCyc" id="YEAST:G3O-30478-MONOMER"/>
<dbReference type="BioGRID-ORCS" id="850587">
    <property type="hits" value="2 hits in 10 CRISPR screens"/>
</dbReference>
<dbReference type="PRO" id="PR:P43606"/>
<dbReference type="Proteomes" id="UP000002311">
    <property type="component" value="Chromosome VI"/>
</dbReference>
<dbReference type="RNAct" id="P43606">
    <property type="molecule type" value="protein"/>
</dbReference>
<dbReference type="GO" id="GO:0005886">
    <property type="term" value="C:plasma membrane"/>
    <property type="evidence" value="ECO:0000314"/>
    <property type="project" value="SGD"/>
</dbReference>
<dbReference type="GO" id="GO:0043200">
    <property type="term" value="P:response to amino acid"/>
    <property type="evidence" value="ECO:0000315"/>
    <property type="project" value="SGD"/>
</dbReference>
<dbReference type="SUPFAM" id="SSF69322">
    <property type="entry name" value="Tricorn protease domain 2"/>
    <property type="match status" value="1"/>
</dbReference>